<organism>
    <name type="scientific">Francisella tularensis subsp. holarctica (strain FTNF002-00 / FTA)</name>
    <dbReference type="NCBI Taxonomy" id="458234"/>
    <lineage>
        <taxon>Bacteria</taxon>
        <taxon>Pseudomonadati</taxon>
        <taxon>Pseudomonadota</taxon>
        <taxon>Gammaproteobacteria</taxon>
        <taxon>Thiotrichales</taxon>
        <taxon>Francisellaceae</taxon>
        <taxon>Francisella</taxon>
    </lineage>
</organism>
<name>MUTS_FRATF</name>
<proteinExistence type="inferred from homology"/>
<protein>
    <recommendedName>
        <fullName evidence="1">DNA mismatch repair protein MutS</fullName>
    </recommendedName>
</protein>
<gene>
    <name evidence="1" type="primary">mutS</name>
    <name type="ordered locus">FTA_0312</name>
</gene>
<comment type="function">
    <text evidence="1">This protein is involved in the repair of mismatches in DNA. It is possible that it carries out the mismatch recognition step. This protein has a weak ATPase activity.</text>
</comment>
<comment type="similarity">
    <text evidence="1">Belongs to the DNA mismatch repair MutS family.</text>
</comment>
<dbReference type="EMBL" id="CP000803">
    <property type="protein sequence ID" value="ABU60789.1"/>
    <property type="molecule type" value="Genomic_DNA"/>
</dbReference>
<dbReference type="RefSeq" id="WP_003014457.1">
    <property type="nucleotide sequence ID" value="NC_009749.1"/>
</dbReference>
<dbReference type="SMR" id="A7N9Y6"/>
<dbReference type="KEGG" id="fta:FTA_0312"/>
<dbReference type="HOGENOM" id="CLU_002472_4_0_6"/>
<dbReference type="GO" id="GO:0005829">
    <property type="term" value="C:cytosol"/>
    <property type="evidence" value="ECO:0007669"/>
    <property type="project" value="TreeGrafter"/>
</dbReference>
<dbReference type="GO" id="GO:0005524">
    <property type="term" value="F:ATP binding"/>
    <property type="evidence" value="ECO:0007669"/>
    <property type="project" value="UniProtKB-UniRule"/>
</dbReference>
<dbReference type="GO" id="GO:0140664">
    <property type="term" value="F:ATP-dependent DNA damage sensor activity"/>
    <property type="evidence" value="ECO:0007669"/>
    <property type="project" value="InterPro"/>
</dbReference>
<dbReference type="GO" id="GO:0003684">
    <property type="term" value="F:damaged DNA binding"/>
    <property type="evidence" value="ECO:0007669"/>
    <property type="project" value="UniProtKB-UniRule"/>
</dbReference>
<dbReference type="GO" id="GO:0030983">
    <property type="term" value="F:mismatched DNA binding"/>
    <property type="evidence" value="ECO:0007669"/>
    <property type="project" value="InterPro"/>
</dbReference>
<dbReference type="GO" id="GO:0006298">
    <property type="term" value="P:mismatch repair"/>
    <property type="evidence" value="ECO:0007669"/>
    <property type="project" value="UniProtKB-UniRule"/>
</dbReference>
<dbReference type="FunFam" id="1.10.1420.10:FF:000002">
    <property type="entry name" value="DNA mismatch repair protein MutS"/>
    <property type="match status" value="1"/>
</dbReference>
<dbReference type="FunFam" id="3.40.1170.10:FF:000001">
    <property type="entry name" value="DNA mismatch repair protein MutS"/>
    <property type="match status" value="1"/>
</dbReference>
<dbReference type="FunFam" id="3.40.50.300:FF:000870">
    <property type="entry name" value="MutS protein homolog 4"/>
    <property type="match status" value="1"/>
</dbReference>
<dbReference type="Gene3D" id="1.10.1420.10">
    <property type="match status" value="2"/>
</dbReference>
<dbReference type="Gene3D" id="3.40.1170.10">
    <property type="entry name" value="DNA repair protein MutS, domain I"/>
    <property type="match status" value="1"/>
</dbReference>
<dbReference type="Gene3D" id="3.30.420.110">
    <property type="entry name" value="MutS, connector domain"/>
    <property type="match status" value="1"/>
</dbReference>
<dbReference type="Gene3D" id="3.40.50.300">
    <property type="entry name" value="P-loop containing nucleotide triphosphate hydrolases"/>
    <property type="match status" value="1"/>
</dbReference>
<dbReference type="HAMAP" id="MF_00096">
    <property type="entry name" value="MutS"/>
    <property type="match status" value="1"/>
</dbReference>
<dbReference type="InterPro" id="IPR005748">
    <property type="entry name" value="DNA_mismatch_repair_MutS"/>
</dbReference>
<dbReference type="InterPro" id="IPR007695">
    <property type="entry name" value="DNA_mismatch_repair_MutS-lik_N"/>
</dbReference>
<dbReference type="InterPro" id="IPR017261">
    <property type="entry name" value="DNA_mismatch_repair_MutS/MSH"/>
</dbReference>
<dbReference type="InterPro" id="IPR000432">
    <property type="entry name" value="DNA_mismatch_repair_MutS_C"/>
</dbReference>
<dbReference type="InterPro" id="IPR007861">
    <property type="entry name" value="DNA_mismatch_repair_MutS_clamp"/>
</dbReference>
<dbReference type="InterPro" id="IPR007696">
    <property type="entry name" value="DNA_mismatch_repair_MutS_core"/>
</dbReference>
<dbReference type="InterPro" id="IPR016151">
    <property type="entry name" value="DNA_mismatch_repair_MutS_N"/>
</dbReference>
<dbReference type="InterPro" id="IPR036187">
    <property type="entry name" value="DNA_mismatch_repair_MutS_sf"/>
</dbReference>
<dbReference type="InterPro" id="IPR007860">
    <property type="entry name" value="DNA_mmatch_repair_MutS_con_dom"/>
</dbReference>
<dbReference type="InterPro" id="IPR045076">
    <property type="entry name" value="MutS"/>
</dbReference>
<dbReference type="InterPro" id="IPR036678">
    <property type="entry name" value="MutS_con_dom_sf"/>
</dbReference>
<dbReference type="InterPro" id="IPR027417">
    <property type="entry name" value="P-loop_NTPase"/>
</dbReference>
<dbReference type="NCBIfam" id="TIGR01070">
    <property type="entry name" value="mutS1"/>
    <property type="match status" value="1"/>
</dbReference>
<dbReference type="NCBIfam" id="NF003810">
    <property type="entry name" value="PRK05399.1"/>
    <property type="match status" value="1"/>
</dbReference>
<dbReference type="PANTHER" id="PTHR11361:SF34">
    <property type="entry name" value="DNA MISMATCH REPAIR PROTEIN MSH1, MITOCHONDRIAL"/>
    <property type="match status" value="1"/>
</dbReference>
<dbReference type="PANTHER" id="PTHR11361">
    <property type="entry name" value="DNA MISMATCH REPAIR PROTEIN MUTS FAMILY MEMBER"/>
    <property type="match status" value="1"/>
</dbReference>
<dbReference type="Pfam" id="PF01624">
    <property type="entry name" value="MutS_I"/>
    <property type="match status" value="1"/>
</dbReference>
<dbReference type="Pfam" id="PF05188">
    <property type="entry name" value="MutS_II"/>
    <property type="match status" value="1"/>
</dbReference>
<dbReference type="Pfam" id="PF05192">
    <property type="entry name" value="MutS_III"/>
    <property type="match status" value="1"/>
</dbReference>
<dbReference type="Pfam" id="PF05190">
    <property type="entry name" value="MutS_IV"/>
    <property type="match status" value="1"/>
</dbReference>
<dbReference type="Pfam" id="PF00488">
    <property type="entry name" value="MutS_V"/>
    <property type="match status" value="1"/>
</dbReference>
<dbReference type="PIRSF" id="PIRSF037677">
    <property type="entry name" value="DNA_mis_repair_Msh6"/>
    <property type="match status" value="1"/>
</dbReference>
<dbReference type="SMART" id="SM00534">
    <property type="entry name" value="MUTSac"/>
    <property type="match status" value="1"/>
</dbReference>
<dbReference type="SMART" id="SM00533">
    <property type="entry name" value="MUTSd"/>
    <property type="match status" value="1"/>
</dbReference>
<dbReference type="SUPFAM" id="SSF55271">
    <property type="entry name" value="DNA repair protein MutS, domain I"/>
    <property type="match status" value="1"/>
</dbReference>
<dbReference type="SUPFAM" id="SSF53150">
    <property type="entry name" value="DNA repair protein MutS, domain II"/>
    <property type="match status" value="1"/>
</dbReference>
<dbReference type="SUPFAM" id="SSF48334">
    <property type="entry name" value="DNA repair protein MutS, domain III"/>
    <property type="match status" value="1"/>
</dbReference>
<dbReference type="SUPFAM" id="SSF52540">
    <property type="entry name" value="P-loop containing nucleoside triphosphate hydrolases"/>
    <property type="match status" value="1"/>
</dbReference>
<dbReference type="PROSITE" id="PS00486">
    <property type="entry name" value="DNA_MISMATCH_REPAIR_2"/>
    <property type="match status" value="1"/>
</dbReference>
<evidence type="ECO:0000255" key="1">
    <source>
        <dbReference type="HAMAP-Rule" id="MF_00096"/>
    </source>
</evidence>
<feature type="chain" id="PRO_0000335156" description="DNA mismatch repair protein MutS">
    <location>
        <begin position="1"/>
        <end position="844"/>
    </location>
</feature>
<feature type="binding site" evidence="1">
    <location>
        <begin position="610"/>
        <end position="617"/>
    </location>
    <ligand>
        <name>ATP</name>
        <dbReference type="ChEBI" id="CHEBI:30616"/>
    </ligand>
</feature>
<keyword id="KW-0067">ATP-binding</keyword>
<keyword id="KW-0227">DNA damage</keyword>
<keyword id="KW-0234">DNA repair</keyword>
<keyword id="KW-0238">DNA-binding</keyword>
<keyword id="KW-0547">Nucleotide-binding</keyword>
<sequence>MQDISNHTPMIQQYLKIKSQYQDILLFYRMGDFYELFFDDAKKAAELLDITLTARGKSNGESIPMAGVPYHAAEAYIAKIVKKGLSIAICEQTGDPNTSKGPVERQVTRIITPATVSEEAFLDNNQDSILVSIFEKNNKYYLAYTSYTQGKIYLVKTLTSLNELKNTVLKLSPQEIITNSRELAQQNPFKKPIKALEEWYYSNFEAKKYINDSLDTNIANNILNLYKNDQLTTIGSILSYLTNILKDTPRHITDISYEQEQDTLNIDINSRINLELDNNSKSSLLSIIGKCKTSLGSRLLKRYFSNPTRNLNILATRHSIINSLGENQHFLKIQDVLSYISDIERIISRVALGTVKPKDLVALRYSLEQLPILKKLLSEKNTPEITNINNRIHQLDELVTLLDKAIIENPPTTIRDGGVIKEGFDKELDELKSIKDNSYDFLIKFEELQKQKIGISTLKVGYNRVHGYYIELSKQHADKIPTEYVRRQTLKASERYITEELKNFEDKVLSSKEKALAREKLIYDTLLKKVIEYYKQIQETAASIAEIDVLANFAERAIKLKLSQPKFNNLAKLELKEVRHLAIEHNIDEPFIPNDTLLSKDTNTLQIITGPNMGGKSTYMRQVAQLIFLAYIGSFVPASYADICDIDTIYTRIGASDDISSGRSTFMVEMTETAYILNNASAKSLVIMDEIGRGTSTFDGLALAKACAEKFAQMGAFTLFATHYFELTELAKQYPNVCNIHFEAKEYKDNIYFMHKAVTGAAKKSYGIQVAKLAGISQDVLESAKQNLYNLEKKQQLTESTQVQAQFQLEPTTQNPLQQKLDAIDINTITPLEALNILFELKKR</sequence>
<accession>A7N9Y6</accession>
<reference key="1">
    <citation type="journal article" date="2009" name="PLoS ONE">
        <title>Complete genome sequence of Francisella tularensis subspecies holarctica FTNF002-00.</title>
        <authorList>
            <person name="Barabote R.D."/>
            <person name="Xie G."/>
            <person name="Brettin T.S."/>
            <person name="Hinrichs S.H."/>
            <person name="Fey P.D."/>
            <person name="Jay J.J."/>
            <person name="Engle J.L."/>
            <person name="Godbole S.D."/>
            <person name="Noronha J.M."/>
            <person name="Scheuermann R.H."/>
            <person name="Zhou L.W."/>
            <person name="Lion C."/>
            <person name="Dempsey M.P."/>
        </authorList>
    </citation>
    <scope>NUCLEOTIDE SEQUENCE [LARGE SCALE GENOMIC DNA]</scope>
    <source>
        <strain>FTNF002-00 / FTA</strain>
    </source>
</reference>